<proteinExistence type="evidence at protein level"/>
<reference key="1">
    <citation type="journal article" date="1998" name="Nature">
        <title>Deciphering the biology of Mycobacterium tuberculosis from the complete genome sequence.</title>
        <authorList>
            <person name="Cole S.T."/>
            <person name="Brosch R."/>
            <person name="Parkhill J."/>
            <person name="Garnier T."/>
            <person name="Churcher C.M."/>
            <person name="Harris D.E."/>
            <person name="Gordon S.V."/>
            <person name="Eiglmeier K."/>
            <person name="Gas S."/>
            <person name="Barry C.E. III"/>
            <person name="Tekaia F."/>
            <person name="Badcock K."/>
            <person name="Basham D."/>
            <person name="Brown D."/>
            <person name="Chillingworth T."/>
            <person name="Connor R."/>
            <person name="Davies R.M."/>
            <person name="Devlin K."/>
            <person name="Feltwell T."/>
            <person name="Gentles S."/>
            <person name="Hamlin N."/>
            <person name="Holroyd S."/>
            <person name="Hornsby T."/>
            <person name="Jagels K."/>
            <person name="Krogh A."/>
            <person name="McLean J."/>
            <person name="Moule S."/>
            <person name="Murphy L.D."/>
            <person name="Oliver S."/>
            <person name="Osborne J."/>
            <person name="Quail M.A."/>
            <person name="Rajandream M.A."/>
            <person name="Rogers J."/>
            <person name="Rutter S."/>
            <person name="Seeger K."/>
            <person name="Skelton S."/>
            <person name="Squares S."/>
            <person name="Squares R."/>
            <person name="Sulston J.E."/>
            <person name="Taylor K."/>
            <person name="Whitehead S."/>
            <person name="Barrell B.G."/>
        </authorList>
    </citation>
    <scope>NUCLEOTIDE SEQUENCE [LARGE SCALE GENOMIC DNA]</scope>
    <source>
        <strain>ATCC 25618 / H37Rv</strain>
    </source>
</reference>
<reference key="2">
    <citation type="journal article" date="2008" name="J. Biol. Chem.">
        <title>Solution structure and refolding of the Mycobacterium tuberculosis pentapeptide repeat protein MfpA.</title>
        <authorList>
            <person name="Khrapunov S."/>
            <person name="Cheng H."/>
            <person name="Hegde S."/>
            <person name="Blanchard J."/>
            <person name="Brenowitz M."/>
        </authorList>
    </citation>
    <scope>SUBUNIT</scope>
    <scope>DOMAIN</scope>
    <scope>FOLDING KINETICS</scope>
    <source>
        <strain>H37Rv</strain>
    </source>
</reference>
<reference key="3">
    <citation type="journal article" date="2009" name="J. Bacteriol.">
        <title>The pentapeptide repeat proteins MfpAMt and QnrB4 exhibit opposite effects on DNA gyrase catalytic reactions and on the ternary gyrase-DNA-quinolone complex.</title>
        <authorList>
            <person name="Merens A."/>
            <person name="Matrat S."/>
            <person name="Aubry A."/>
            <person name="Lascols C."/>
            <person name="Jarlier V."/>
            <person name="Soussy C.J."/>
            <person name="Cavallo J.D."/>
            <person name="Cambau E."/>
        </authorList>
    </citation>
    <scope>FUNCTION</scope>
    <scope>SUBUNIT</scope>
    <source>
        <strain>H37Rv</strain>
    </source>
</reference>
<reference key="4">
    <citation type="journal article" date="2011" name="Biophys. Chem.">
        <title>Stability, denaturation and refolding of Mycobacterium tuberculosis MfpA, a DNA mimicking protein that confers antibiotic resistance.</title>
        <authorList>
            <person name="Khrapunov S."/>
            <person name="Brenowitz M."/>
        </authorList>
    </citation>
    <scope>FOLDING KINETICS</scope>
    <source>
        <strain>H37Rv</strain>
    </source>
</reference>
<reference key="5">
    <citation type="journal article" date="2005" name="Science">
        <title>A fluoroquinolone resistance protein from Mycobacterium tuberculosis that mimics DNA.</title>
        <authorList>
            <person name="Hegde S.S."/>
            <person name="Vetting M.W."/>
            <person name="Roderick S.L."/>
            <person name="Mitchenall L.A."/>
            <person name="Maxwell A."/>
            <person name="Takiff H.E."/>
            <person name="Blanchard J.S."/>
        </authorList>
    </citation>
    <scope>X-RAY CRYSTALLOGRAPHY (2.00 ANGSTROMS)</scope>
    <scope>FUNCTION IN E.COLI</scope>
    <scope>SUBUNIT</scope>
    <scope>DOMAIN</scope>
    <source>
        <strain>H37Rv</strain>
    </source>
</reference>
<organism>
    <name type="scientific">Mycobacterium tuberculosis (strain ATCC 25618 / H37Rv)</name>
    <dbReference type="NCBI Taxonomy" id="83332"/>
    <lineage>
        <taxon>Bacteria</taxon>
        <taxon>Bacillati</taxon>
        <taxon>Actinomycetota</taxon>
        <taxon>Actinomycetes</taxon>
        <taxon>Mycobacteriales</taxon>
        <taxon>Mycobacteriaceae</taxon>
        <taxon>Mycobacterium</taxon>
        <taxon>Mycobacterium tuberculosis complex</taxon>
    </lineage>
</organism>
<evidence type="ECO:0000255" key="1"/>
<evidence type="ECO:0000269" key="2">
    <source>
    </source>
</evidence>
<evidence type="ECO:0000269" key="3">
    <source>
    </source>
</evidence>
<evidence type="ECO:0000269" key="4">
    <source>
    </source>
</evidence>
<evidence type="ECO:0000303" key="5">
    <source>
    </source>
</evidence>
<evidence type="ECO:0000303" key="6">
    <source>
    </source>
</evidence>
<evidence type="ECO:0000305" key="7"/>
<evidence type="ECO:0000305" key="8">
    <source>
    </source>
</evidence>
<evidence type="ECO:0000305" key="9">
    <source>
    </source>
</evidence>
<feature type="chain" id="PRO_0000434153" description="Pentapeptide repeat protein MfpA">
    <location>
        <begin position="1"/>
        <end position="183"/>
    </location>
</feature>
<feature type="domain" description="Pentapeptide repeat" evidence="1">
    <location>
        <begin position="113"/>
        <end position="147"/>
    </location>
</feature>
<sequence>MQQWVDCEFTGRDFRDEDLSRLHTERAMFSECDFSGVNLAESQHRGSAFRNCTFERTTLWHSTFAQCSMLGSVFVACRLRPLTLDDVDFTLAVLGGNDLRGLNLTGCRLRETSLVDTDLRKCVLRGADLSGARTTGARLDDADLRGATVDPVLWRTASLVGARVDVDQAVAFAAAHGLCLAGG</sequence>
<dbReference type="EMBL" id="AL123456">
    <property type="protein sequence ID" value="CCP46182.1"/>
    <property type="molecule type" value="Genomic_DNA"/>
</dbReference>
<dbReference type="RefSeq" id="NP_217878.1">
    <property type="nucleotide sequence ID" value="NC_000962.3"/>
</dbReference>
<dbReference type="RefSeq" id="WP_003417767.1">
    <property type="nucleotide sequence ID" value="NZ_NVQJ01000052.1"/>
</dbReference>
<dbReference type="PDB" id="2BM4">
    <property type="method" value="X-ray"/>
    <property type="resolution" value="2.20 A"/>
    <property type="chains" value="A/B=1-183"/>
</dbReference>
<dbReference type="PDB" id="2BM5">
    <property type="method" value="X-ray"/>
    <property type="resolution" value="2.00 A"/>
    <property type="chains" value="A/B=1-183"/>
</dbReference>
<dbReference type="PDB" id="2BM6">
    <property type="method" value="X-ray"/>
    <property type="resolution" value="2.20 A"/>
    <property type="chains" value="A=1-183"/>
</dbReference>
<dbReference type="PDB" id="2BM7">
    <property type="method" value="X-ray"/>
    <property type="resolution" value="2.70 A"/>
    <property type="chains" value="A/B/C=1-183"/>
</dbReference>
<dbReference type="PDBsum" id="2BM4"/>
<dbReference type="PDBsum" id="2BM5"/>
<dbReference type="PDBsum" id="2BM6"/>
<dbReference type="PDBsum" id="2BM7"/>
<dbReference type="SMR" id="I6YBX3"/>
<dbReference type="STRING" id="83332.Rv3361c"/>
<dbReference type="CARD" id="ARO:3003035">
    <property type="molecule name" value="mfpA"/>
    <property type="mechanism identifier" value="ARO:0001003"/>
    <property type="mechanism name" value="antibiotic target protection"/>
</dbReference>
<dbReference type="PaxDb" id="83332-Rv3361c"/>
<dbReference type="DNASU" id="888130"/>
<dbReference type="GeneID" id="45427360"/>
<dbReference type="GeneID" id="888130"/>
<dbReference type="KEGG" id="mtu:Rv3361c"/>
<dbReference type="KEGG" id="mtv:RVBD_3361c"/>
<dbReference type="PATRIC" id="fig|83332.111.peg.3750"/>
<dbReference type="TubercuList" id="Rv3361c"/>
<dbReference type="eggNOG" id="COG1357">
    <property type="taxonomic scope" value="Bacteria"/>
</dbReference>
<dbReference type="HOGENOM" id="CLU_033401_5_5_11"/>
<dbReference type="InParanoid" id="I6YBX3"/>
<dbReference type="OrthoDB" id="2579959at2"/>
<dbReference type="PhylomeDB" id="I6YBX3"/>
<dbReference type="Proteomes" id="UP000001584">
    <property type="component" value="Chromosome"/>
</dbReference>
<dbReference type="Gene3D" id="2.160.20.80">
    <property type="entry name" value="E3 ubiquitin-protein ligase SopA"/>
    <property type="match status" value="1"/>
</dbReference>
<dbReference type="InterPro" id="IPR001646">
    <property type="entry name" value="5peptide_repeat"/>
</dbReference>
<dbReference type="InterPro" id="IPR051082">
    <property type="entry name" value="Pentapeptide-BTB/POZ_domain"/>
</dbReference>
<dbReference type="NCBIfam" id="NF000349">
    <property type="entry name" value="mfpA_AE000516.2"/>
    <property type="match status" value="1"/>
</dbReference>
<dbReference type="PANTHER" id="PTHR14136">
    <property type="entry name" value="BTB_POZ DOMAIN-CONTAINING PROTEIN KCTD9"/>
    <property type="match status" value="1"/>
</dbReference>
<dbReference type="PANTHER" id="PTHR14136:SF17">
    <property type="entry name" value="BTB_POZ DOMAIN-CONTAINING PROTEIN KCTD9"/>
    <property type="match status" value="1"/>
</dbReference>
<dbReference type="Pfam" id="PF00805">
    <property type="entry name" value="Pentapeptide"/>
    <property type="match status" value="1"/>
</dbReference>
<dbReference type="Pfam" id="PF13576">
    <property type="entry name" value="Pentapeptide_3"/>
    <property type="match status" value="1"/>
</dbReference>
<dbReference type="SUPFAM" id="SSF141571">
    <property type="entry name" value="Pentapeptide repeat-like"/>
    <property type="match status" value="1"/>
</dbReference>
<gene>
    <name evidence="5" type="primary">mfpA</name>
    <name type="ordered locus">Rv3361c</name>
</gene>
<keyword id="KW-0002">3D-structure</keyword>
<keyword id="KW-1185">Reference proteome</keyword>
<accession>I6YBX3</accession>
<protein>
    <recommendedName>
        <fullName evidence="5">Pentapeptide repeat protein MfpA</fullName>
        <shortName evidence="6">MfpAMt</shortName>
    </recommendedName>
</protein>
<name>MFPA_MYCTU</name>
<comment type="function">
    <text evidence="2 4">Might be involved in fluoroquinolone resistance (PubMed:15933203). Inhibits ATP-independent DNA relaxation, ATP-dependent DNA supercoiling and ATP-dependent decatenation by endogenous gyrase, 50% inhibition occurs at 2 uM; inhibition is abolished if GyrA is mutated (Asp-87 to Gly or His) (PubMed:19060136). Also inhibits fluoroquinolone-promoted dsDNA cleavage (PubMed:19060136). Increases fluoroquinolone (ciprofloxacin or moxifloxacin) inhibition of gyrase supercoiling activity in a concentration-dependent manner (PubMed:19060136). Inhibits DNA relaxation and supercoiling by E.coli gyrase (PubMed:15933203). Forms a structure that exhibits size, shape and electrostatic similarity to B-form DNA; it may bind to DNA gyrase which is postulated to protect it from fluoroquinolones (PubMed:15933203).</text>
</comment>
<comment type="subunit">
    <text evidence="3 8 9">Homodimer. Probably interacts with DNA gyrase.</text>
</comment>
<comment type="domain">
    <text evidence="2 3">Each subunit forms a right-handed beta-helix with 8 complete coils that stack upon each other.</text>
</comment>
<comment type="similarity">
    <text evidence="7">Belongs to the pentapeptide repeat protein family.</text>
</comment>